<organism>
    <name type="scientific">Oryctolagus cuniculus</name>
    <name type="common">Rabbit</name>
    <dbReference type="NCBI Taxonomy" id="9986"/>
    <lineage>
        <taxon>Eukaryota</taxon>
        <taxon>Metazoa</taxon>
        <taxon>Chordata</taxon>
        <taxon>Craniata</taxon>
        <taxon>Vertebrata</taxon>
        <taxon>Euteleostomi</taxon>
        <taxon>Mammalia</taxon>
        <taxon>Eutheria</taxon>
        <taxon>Euarchontoglires</taxon>
        <taxon>Glires</taxon>
        <taxon>Lagomorpha</taxon>
        <taxon>Leporidae</taxon>
        <taxon>Oryctolagus</taxon>
    </lineage>
</organism>
<proteinExistence type="evidence at protein level"/>
<reference key="1">
    <citation type="journal article" date="1992" name="J. Leukoc. Biol.">
        <title>Cationic defensins arise from charge-neutralized propeptides: a mechanism for avoiding leukocyte autocytotoxicity?</title>
        <authorList>
            <person name="Michaelson D."/>
            <person name="Couto M."/>
            <person name="Rayner J.R."/>
            <person name="Ganz T."/>
        </authorList>
    </citation>
    <scope>NUCLEOTIDE SEQUENCE [MRNA]</scope>
</reference>
<reference key="2">
    <citation type="journal article" date="1993" name="Biochem. Biophys. Res. Commun.">
        <title>Differential expression of corticostatins/defensins: higher levels of CS-4 (NP-2) transcripts compared with CS-6 (NP-5) in rabbit lung.</title>
        <authorList>
            <person name="Sadro L.C."/>
            <person name="Tremblay A."/>
            <person name="Solomon S."/>
            <person name="Palfree R.G.E."/>
        </authorList>
    </citation>
    <scope>NUCLEOTIDE SEQUENCE [MRNA]</scope>
</reference>
<reference key="3">
    <citation type="journal article" date="1985" name="J. Biol. Chem.">
        <title>Primary structures of six antimicrobial peptides of rabbit peritoneal neutrophils.</title>
        <authorList>
            <person name="Selsted M.E."/>
            <person name="Brown D.M."/>
            <person name="Delange R.J."/>
            <person name="Harwig S.S.L."/>
            <person name="Lehrer R.I."/>
        </authorList>
    </citation>
    <scope>PROTEIN SEQUENCE OF 63-94</scope>
    <source>
        <tissue>Peritoneal neutrophil</tissue>
    </source>
</reference>
<reference key="4">
    <citation type="journal article" date="1988" name="J. Mol. Biol.">
        <title>Solution structures of the rabbit neutrophil defensin NP-5.</title>
        <authorList>
            <person name="Pardi A."/>
            <person name="Hare D.R."/>
            <person name="Selsted M.E."/>
            <person name="Morrison R.D."/>
            <person name="Bassolino D.A."/>
            <person name="Bach A.C. II"/>
        </authorList>
    </citation>
    <scope>STRUCTURE BY NMR OF 63-95</scope>
</reference>
<reference key="5">
    <citation type="journal article" date="1989" name="Biochemistry">
        <title>Solution structures of proteins from NMR data and modeling: alternative folds for neutrophil peptide 5.</title>
        <authorList>
            <person name="Levy R.M."/>
            <person name="Bassolino D.A."/>
            <person name="Kitchen D.B."/>
            <person name="Pardi A."/>
        </authorList>
    </citation>
    <scope>STRUCTURE BY NMR OF 63-95</scope>
</reference>
<reference key="6">
    <citation type="journal article" date="1990" name="Biopolymers">
        <title>Analysis of side-chain conformational distributions in neutrophil peptide-5 NMR structures.</title>
        <authorList>
            <person name="Kominos D."/>
            <person name="Bassolino D.A."/>
            <person name="Levy R.M."/>
            <person name="Pardi A."/>
        </authorList>
    </citation>
    <scope>STRUCTURE BY NMR OF 63-95</scope>
</reference>
<feature type="signal peptide" evidence="2">
    <location>
        <begin position="1"/>
        <end position="19"/>
    </location>
</feature>
<feature type="propeptide" id="PRO_0000006815" evidence="3">
    <location>
        <begin position="20"/>
        <end position="62"/>
    </location>
</feature>
<feature type="peptide" id="PRO_0000006816" description="Neutrophil antibiotic peptide NP-5">
    <location>
        <begin position="63"/>
        <end position="95"/>
    </location>
</feature>
<feature type="disulfide bond" evidence="1">
    <location>
        <begin position="65"/>
        <end position="93"/>
    </location>
</feature>
<feature type="disulfide bond" evidence="1">
    <location>
        <begin position="67"/>
        <end position="82"/>
    </location>
</feature>
<feature type="disulfide bond" evidence="1">
    <location>
        <begin position="72"/>
        <end position="92"/>
    </location>
</feature>
<dbReference type="EMBL" id="S55578">
    <property type="protein sequence ID" value="AAB25448.1"/>
    <property type="molecule type" value="mRNA"/>
</dbReference>
<dbReference type="EMBL" id="M64602">
    <property type="protein sequence ID" value="AAA31239.1"/>
    <property type="molecule type" value="mRNA"/>
</dbReference>
<dbReference type="EMBL" id="L10842">
    <property type="protein sequence ID" value="AAA31425.1"/>
    <property type="molecule type" value="mRNA"/>
</dbReference>
<dbReference type="PIR" id="JC1462">
    <property type="entry name" value="JC1462"/>
</dbReference>
<dbReference type="RefSeq" id="NP_001075769.1">
    <property type="nucleotide sequence ID" value="NM_001082300.1"/>
</dbReference>
<dbReference type="BMRB" id="P07466"/>
<dbReference type="SMR" id="P07466"/>
<dbReference type="STRING" id="9986.ENSOCUP00000016335"/>
<dbReference type="PaxDb" id="9986-ENSOCUP00000016335"/>
<dbReference type="Ensembl" id="ENSOCUT00000030547.3">
    <property type="protein sequence ID" value="ENSOCUP00000016335.3"/>
    <property type="gene ID" value="ENSOCUG00000023668.3"/>
</dbReference>
<dbReference type="GeneID" id="100009136"/>
<dbReference type="KEGG" id="ocu:100009136"/>
<dbReference type="eggNOG" id="ENOG502T2EX">
    <property type="taxonomic scope" value="Eukaryota"/>
</dbReference>
<dbReference type="GeneTree" id="ENSGT00940000153268"/>
<dbReference type="InParanoid" id="P07466"/>
<dbReference type="TreeFam" id="TF338414"/>
<dbReference type="Proteomes" id="UP000001811">
    <property type="component" value="Unplaced"/>
</dbReference>
<dbReference type="Bgee" id="ENSOCUG00000023668">
    <property type="expression patterns" value="Expressed in blood and 13 other cell types or tissues"/>
</dbReference>
<dbReference type="GO" id="GO:0031012">
    <property type="term" value="C:extracellular matrix"/>
    <property type="evidence" value="ECO:0007669"/>
    <property type="project" value="TreeGrafter"/>
</dbReference>
<dbReference type="GO" id="GO:0005615">
    <property type="term" value="C:extracellular space"/>
    <property type="evidence" value="ECO:0007669"/>
    <property type="project" value="InterPro"/>
</dbReference>
<dbReference type="GO" id="GO:0019731">
    <property type="term" value="P:antibacterial humoral response"/>
    <property type="evidence" value="ECO:0007669"/>
    <property type="project" value="TreeGrafter"/>
</dbReference>
<dbReference type="GO" id="GO:0061844">
    <property type="term" value="P:antimicrobial humoral immune response mediated by antimicrobial peptide"/>
    <property type="evidence" value="ECO:0007669"/>
    <property type="project" value="TreeGrafter"/>
</dbReference>
<dbReference type="GO" id="GO:0071222">
    <property type="term" value="P:cellular response to lipopolysaccharide"/>
    <property type="evidence" value="ECO:0007669"/>
    <property type="project" value="TreeGrafter"/>
</dbReference>
<dbReference type="GO" id="GO:0050829">
    <property type="term" value="P:defense response to Gram-negative bacterium"/>
    <property type="evidence" value="ECO:0007669"/>
    <property type="project" value="TreeGrafter"/>
</dbReference>
<dbReference type="GO" id="GO:0050830">
    <property type="term" value="P:defense response to Gram-positive bacterium"/>
    <property type="evidence" value="ECO:0007669"/>
    <property type="project" value="TreeGrafter"/>
</dbReference>
<dbReference type="GO" id="GO:0051673">
    <property type="term" value="P:disruption of plasma membrane integrity in another organism"/>
    <property type="evidence" value="ECO:0007669"/>
    <property type="project" value="TreeGrafter"/>
</dbReference>
<dbReference type="GO" id="GO:0002227">
    <property type="term" value="P:innate immune response in mucosa"/>
    <property type="evidence" value="ECO:0007669"/>
    <property type="project" value="TreeGrafter"/>
</dbReference>
<dbReference type="InterPro" id="IPR016327">
    <property type="entry name" value="Alpha-defensin"/>
</dbReference>
<dbReference type="InterPro" id="IPR006081">
    <property type="entry name" value="Alpha-defensin_C"/>
</dbReference>
<dbReference type="InterPro" id="IPR002366">
    <property type="entry name" value="Alpha-defensin_N"/>
</dbReference>
<dbReference type="InterPro" id="IPR006080">
    <property type="entry name" value="Beta/alpha-defensin_C"/>
</dbReference>
<dbReference type="PANTHER" id="PTHR11876">
    <property type="entry name" value="ALPHA-DEFENSIN 1"/>
    <property type="match status" value="1"/>
</dbReference>
<dbReference type="PANTHER" id="PTHR11876:SF28">
    <property type="entry name" value="ALPHA-DEFENSIN 1"/>
    <property type="match status" value="1"/>
</dbReference>
<dbReference type="Pfam" id="PF00323">
    <property type="entry name" value="Defensin_1"/>
    <property type="match status" value="1"/>
</dbReference>
<dbReference type="Pfam" id="PF00879">
    <property type="entry name" value="Defensin_propep"/>
    <property type="match status" value="1"/>
</dbReference>
<dbReference type="PIRSF" id="PIRSF001875">
    <property type="entry name" value="Alpha-defensin"/>
    <property type="match status" value="1"/>
</dbReference>
<dbReference type="SMART" id="SM01418">
    <property type="entry name" value="Defensin_propep"/>
    <property type="match status" value="1"/>
</dbReference>
<dbReference type="SMART" id="SM00048">
    <property type="entry name" value="DEFSN"/>
    <property type="match status" value="1"/>
</dbReference>
<dbReference type="PROSITE" id="PS00269">
    <property type="entry name" value="DEFENSIN"/>
    <property type="match status" value="1"/>
</dbReference>
<accession>P07466</accession>
<sequence length="95" mass="10122">MRTLALLAAILLVTLQAQAELHSGMADDGVDQQQPRAQDLDVAVYIKQDETSPLEVLGAKAGVFCTCRGFLCGSGERASGSCTINGVRHTLCCRR</sequence>
<evidence type="ECO:0000250" key="1"/>
<evidence type="ECO:0000255" key="2"/>
<evidence type="ECO:0000269" key="3">
    <source>
    </source>
</evidence>
<evidence type="ECO:0000305" key="4"/>
<keyword id="KW-0044">Antibiotic</keyword>
<keyword id="KW-0929">Antimicrobial</keyword>
<keyword id="KW-0211">Defensin</keyword>
<keyword id="KW-0903">Direct protein sequencing</keyword>
<keyword id="KW-1015">Disulfide bond</keyword>
<keyword id="KW-1185">Reference proteome</keyword>
<keyword id="KW-0964">Secreted</keyword>
<keyword id="KW-0732">Signal</keyword>
<comment type="function">
    <text>Microbicidal activity.</text>
</comment>
<comment type="subcellular location">
    <subcellularLocation>
        <location>Secreted</location>
    </subcellularLocation>
</comment>
<comment type="similarity">
    <text evidence="4">Belongs to the alpha-defensin family.</text>
</comment>
<name>DEF6_RABIT</name>
<protein>
    <recommendedName>
        <fullName>Neutrophil antibiotic peptide NP-5</fullName>
    </recommendedName>
    <alternativeName>
        <fullName>Microbicidal peptide NP-5</fullName>
    </alternativeName>
</protein>